<accession>Q9ZDW2</accession>
<comment type="function">
    <text evidence="1">The UvrABC repair system catalyzes the recognition and processing of DNA lesions. A damage recognition complex composed of 2 UvrA and 2 UvrB subunits scans DNA for abnormalities. Upon binding of the UvrA(2)B(2) complex to a putative damaged site, the DNA wraps around one UvrB monomer. DNA wrap is dependent on ATP binding by UvrB and probably causes local melting of the DNA helix, facilitating insertion of UvrB beta-hairpin between the DNA strands. Then UvrB probes one DNA strand for the presence of a lesion. If a lesion is found the UvrA subunits dissociate and the UvrB-DNA preincision complex is formed. This complex is subsequently bound by UvrC and the second UvrB is released. If no lesion is found, the DNA wraps around the other UvrB subunit that will check the other stand for damage.</text>
</comment>
<comment type="subunit">
    <text evidence="1">Forms a heterotetramer with UvrA during the search for lesions. Interacts with UvrC in an incision complex.</text>
</comment>
<comment type="subcellular location">
    <subcellularLocation>
        <location evidence="1">Cytoplasm</location>
    </subcellularLocation>
</comment>
<comment type="domain">
    <text evidence="1">The beta-hairpin motif is involved in DNA binding.</text>
</comment>
<comment type="similarity">
    <text evidence="1">Belongs to the UvrB family.</text>
</comment>
<proteinExistence type="inferred from homology"/>
<keyword id="KW-0067">ATP-binding</keyword>
<keyword id="KW-0963">Cytoplasm</keyword>
<keyword id="KW-0227">DNA damage</keyword>
<keyword id="KW-0228">DNA excision</keyword>
<keyword id="KW-0234">DNA repair</keyword>
<keyword id="KW-0267">Excision nuclease</keyword>
<keyword id="KW-0547">Nucleotide-binding</keyword>
<keyword id="KW-1185">Reference proteome</keyword>
<keyword id="KW-0742">SOS response</keyword>
<evidence type="ECO:0000255" key="1">
    <source>
        <dbReference type="HAMAP-Rule" id="MF_00204"/>
    </source>
</evidence>
<dbReference type="EMBL" id="AJ235270">
    <property type="protein sequence ID" value="CAA14668.1"/>
    <property type="molecule type" value="Genomic_DNA"/>
</dbReference>
<dbReference type="PIR" id="E71731">
    <property type="entry name" value="E71731"/>
</dbReference>
<dbReference type="RefSeq" id="NP_220591.1">
    <property type="nucleotide sequence ID" value="NC_000963.1"/>
</dbReference>
<dbReference type="RefSeq" id="WP_004598584.1">
    <property type="nucleotide sequence ID" value="NC_000963.1"/>
</dbReference>
<dbReference type="SMR" id="Q9ZDW2"/>
<dbReference type="STRING" id="272947.gene:17555284"/>
<dbReference type="EnsemblBacteria" id="CAA14668">
    <property type="protein sequence ID" value="CAA14668"/>
    <property type="gene ID" value="CAA14668"/>
</dbReference>
<dbReference type="GeneID" id="57569331"/>
<dbReference type="KEGG" id="rpr:RP203"/>
<dbReference type="PATRIC" id="fig|272947.5.peg.212"/>
<dbReference type="eggNOG" id="COG0556">
    <property type="taxonomic scope" value="Bacteria"/>
</dbReference>
<dbReference type="HOGENOM" id="CLU_009621_2_1_5"/>
<dbReference type="OrthoDB" id="9806651at2"/>
<dbReference type="Proteomes" id="UP000002480">
    <property type="component" value="Chromosome"/>
</dbReference>
<dbReference type="GO" id="GO:0005737">
    <property type="term" value="C:cytoplasm"/>
    <property type="evidence" value="ECO:0007669"/>
    <property type="project" value="UniProtKB-SubCell"/>
</dbReference>
<dbReference type="GO" id="GO:0009380">
    <property type="term" value="C:excinuclease repair complex"/>
    <property type="evidence" value="ECO:0007669"/>
    <property type="project" value="InterPro"/>
</dbReference>
<dbReference type="GO" id="GO:0005524">
    <property type="term" value="F:ATP binding"/>
    <property type="evidence" value="ECO:0007669"/>
    <property type="project" value="UniProtKB-UniRule"/>
</dbReference>
<dbReference type="GO" id="GO:0016887">
    <property type="term" value="F:ATP hydrolysis activity"/>
    <property type="evidence" value="ECO:0007669"/>
    <property type="project" value="InterPro"/>
</dbReference>
<dbReference type="GO" id="GO:0003677">
    <property type="term" value="F:DNA binding"/>
    <property type="evidence" value="ECO:0007669"/>
    <property type="project" value="UniProtKB-UniRule"/>
</dbReference>
<dbReference type="GO" id="GO:0009381">
    <property type="term" value="F:excinuclease ABC activity"/>
    <property type="evidence" value="ECO:0007669"/>
    <property type="project" value="UniProtKB-UniRule"/>
</dbReference>
<dbReference type="GO" id="GO:0006289">
    <property type="term" value="P:nucleotide-excision repair"/>
    <property type="evidence" value="ECO:0007669"/>
    <property type="project" value="UniProtKB-UniRule"/>
</dbReference>
<dbReference type="GO" id="GO:0009432">
    <property type="term" value="P:SOS response"/>
    <property type="evidence" value="ECO:0007669"/>
    <property type="project" value="UniProtKB-UniRule"/>
</dbReference>
<dbReference type="CDD" id="cd17916">
    <property type="entry name" value="DEXHc_UvrB"/>
    <property type="match status" value="1"/>
</dbReference>
<dbReference type="CDD" id="cd18790">
    <property type="entry name" value="SF2_C_UvrB"/>
    <property type="match status" value="1"/>
</dbReference>
<dbReference type="Gene3D" id="3.40.50.300">
    <property type="entry name" value="P-loop containing nucleotide triphosphate hydrolases"/>
    <property type="match status" value="3"/>
</dbReference>
<dbReference type="Gene3D" id="4.10.860.10">
    <property type="entry name" value="UVR domain"/>
    <property type="match status" value="1"/>
</dbReference>
<dbReference type="HAMAP" id="MF_00204">
    <property type="entry name" value="UvrB"/>
    <property type="match status" value="1"/>
</dbReference>
<dbReference type="InterPro" id="IPR006935">
    <property type="entry name" value="Helicase/UvrB_N"/>
</dbReference>
<dbReference type="InterPro" id="IPR014001">
    <property type="entry name" value="Helicase_ATP-bd"/>
</dbReference>
<dbReference type="InterPro" id="IPR001650">
    <property type="entry name" value="Helicase_C-like"/>
</dbReference>
<dbReference type="InterPro" id="IPR027417">
    <property type="entry name" value="P-loop_NTPase"/>
</dbReference>
<dbReference type="InterPro" id="IPR001943">
    <property type="entry name" value="UVR_dom"/>
</dbReference>
<dbReference type="InterPro" id="IPR036876">
    <property type="entry name" value="UVR_dom_sf"/>
</dbReference>
<dbReference type="InterPro" id="IPR004807">
    <property type="entry name" value="UvrB"/>
</dbReference>
<dbReference type="InterPro" id="IPR041471">
    <property type="entry name" value="UvrB_inter"/>
</dbReference>
<dbReference type="InterPro" id="IPR024759">
    <property type="entry name" value="UvrB_YAD/RRR_dom"/>
</dbReference>
<dbReference type="NCBIfam" id="NF003673">
    <property type="entry name" value="PRK05298.1"/>
    <property type="match status" value="1"/>
</dbReference>
<dbReference type="NCBIfam" id="TIGR00631">
    <property type="entry name" value="uvrb"/>
    <property type="match status" value="1"/>
</dbReference>
<dbReference type="PANTHER" id="PTHR24029">
    <property type="entry name" value="UVRABC SYSTEM PROTEIN B"/>
    <property type="match status" value="1"/>
</dbReference>
<dbReference type="PANTHER" id="PTHR24029:SF0">
    <property type="entry name" value="UVRABC SYSTEM PROTEIN B"/>
    <property type="match status" value="1"/>
</dbReference>
<dbReference type="Pfam" id="PF00271">
    <property type="entry name" value="Helicase_C"/>
    <property type="match status" value="1"/>
</dbReference>
<dbReference type="Pfam" id="PF04851">
    <property type="entry name" value="ResIII"/>
    <property type="match status" value="1"/>
</dbReference>
<dbReference type="Pfam" id="PF02151">
    <property type="entry name" value="UVR"/>
    <property type="match status" value="1"/>
</dbReference>
<dbReference type="Pfam" id="PF12344">
    <property type="entry name" value="UvrB"/>
    <property type="match status" value="1"/>
</dbReference>
<dbReference type="Pfam" id="PF17757">
    <property type="entry name" value="UvrB_inter"/>
    <property type="match status" value="1"/>
</dbReference>
<dbReference type="SMART" id="SM00487">
    <property type="entry name" value="DEXDc"/>
    <property type="match status" value="1"/>
</dbReference>
<dbReference type="SMART" id="SM00490">
    <property type="entry name" value="HELICc"/>
    <property type="match status" value="1"/>
</dbReference>
<dbReference type="SUPFAM" id="SSF46600">
    <property type="entry name" value="C-terminal UvrC-binding domain of UvrB"/>
    <property type="match status" value="1"/>
</dbReference>
<dbReference type="SUPFAM" id="SSF52540">
    <property type="entry name" value="P-loop containing nucleoside triphosphate hydrolases"/>
    <property type="match status" value="2"/>
</dbReference>
<dbReference type="PROSITE" id="PS51192">
    <property type="entry name" value="HELICASE_ATP_BIND_1"/>
    <property type="match status" value="1"/>
</dbReference>
<dbReference type="PROSITE" id="PS51194">
    <property type="entry name" value="HELICASE_CTER"/>
    <property type="match status" value="1"/>
</dbReference>
<dbReference type="PROSITE" id="PS50151">
    <property type="entry name" value="UVR"/>
    <property type="match status" value="1"/>
</dbReference>
<reference key="1">
    <citation type="journal article" date="1998" name="Nature">
        <title>The genome sequence of Rickettsia prowazekii and the origin of mitochondria.</title>
        <authorList>
            <person name="Andersson S.G.E."/>
            <person name="Zomorodipour A."/>
            <person name="Andersson J.O."/>
            <person name="Sicheritz-Ponten T."/>
            <person name="Alsmark U.C.M."/>
            <person name="Podowski R.M."/>
            <person name="Naeslund A.K."/>
            <person name="Eriksson A.-S."/>
            <person name="Winkler H.H."/>
            <person name="Kurland C.G."/>
        </authorList>
    </citation>
    <scope>NUCLEOTIDE SEQUENCE [LARGE SCALE GENOMIC DNA]</scope>
    <source>
        <strain>Madrid E</strain>
    </source>
</reference>
<name>UVRB_RICPR</name>
<gene>
    <name evidence="1" type="primary">uvrB</name>
    <name type="ordered locus">RP203</name>
</gene>
<sequence length="662" mass="75859">MNNFSIISGYKPAGDQPKAIDEIITGLNSKKRSQMLLGITGSGKTFTMANIIERTNRPTLIMAHNKTLAAQIYLEMKSIFPKNAVEYFVSYYDYYQPESYIVRTDTFIEKDSSINEQIDLMRHSATRSLLERRDVIVISSVSCIYGLGAPDLYYQMTVHLEPGQNYPRDKLLNDLINLQYKRNDIGFERGCFRVKGDNMDIFPSHYSDKAWRLSFFGDELEYIHEFDPLTGEKLTQLDKAMIFGNSHFVMPRERINHAISSIEVELQKRLEFLKSQDKLIEAKRLNQRTLYDLEMLTETGSCKGIENYSRFFTGRNAGQPPPTLFEYLPEDALLFIDESHVSVPQIRAMYNSDRARKEVLVEHGFRLPSALDNRPLKFEEWEKFRPQTVFVSATPGQFELEETGGTVVELIIRPTGLLDPECIIKPATNQVEDLISEIQTTINTGLRILVTTLTKKMAEDLTSYLQDLQYKTYYLHSNIHTLERIEILRNLRQGTIDILVGINLLREGIDIPECGLVAILDADKEGFLRSETSLIQTIGRAARNSRGKVILYADKMTKSIDKAVSETLRRRQIQQEYNKKHGIIPKTINRAIHALESLEEIHDNKLDKKQANALLNNPAKLKAHMDKLKKEMFKAASNLEFEQAAKLRNQLKALEEAALKLS</sequence>
<feature type="chain" id="PRO_0000138421" description="UvrABC system protein B">
    <location>
        <begin position="1"/>
        <end position="662"/>
    </location>
</feature>
<feature type="domain" description="Helicase ATP-binding" evidence="1">
    <location>
        <begin position="25"/>
        <end position="414"/>
    </location>
</feature>
<feature type="domain" description="Helicase C-terminal" evidence="1">
    <location>
        <begin position="430"/>
        <end position="592"/>
    </location>
</feature>
<feature type="domain" description="UVR" evidence="1">
    <location>
        <begin position="622"/>
        <end position="657"/>
    </location>
</feature>
<feature type="short sequence motif" description="Beta-hairpin">
    <location>
        <begin position="91"/>
        <end position="114"/>
    </location>
</feature>
<feature type="binding site" evidence="1">
    <location>
        <begin position="38"/>
        <end position="45"/>
    </location>
    <ligand>
        <name>ATP</name>
        <dbReference type="ChEBI" id="CHEBI:30616"/>
    </ligand>
</feature>
<protein>
    <recommendedName>
        <fullName evidence="1">UvrABC system protein B</fullName>
        <shortName evidence="1">Protein UvrB</shortName>
    </recommendedName>
    <alternativeName>
        <fullName evidence="1">Excinuclease ABC subunit B</fullName>
    </alternativeName>
</protein>
<organism>
    <name type="scientific">Rickettsia prowazekii (strain Madrid E)</name>
    <dbReference type="NCBI Taxonomy" id="272947"/>
    <lineage>
        <taxon>Bacteria</taxon>
        <taxon>Pseudomonadati</taxon>
        <taxon>Pseudomonadota</taxon>
        <taxon>Alphaproteobacteria</taxon>
        <taxon>Rickettsiales</taxon>
        <taxon>Rickettsiaceae</taxon>
        <taxon>Rickettsieae</taxon>
        <taxon>Rickettsia</taxon>
        <taxon>typhus group</taxon>
    </lineage>
</organism>